<accession>Q5M7F4</accession>
<sequence>MWIHFAPLRIPFSRRLQTVAVLQWAVSFLAMAQCCIALYILLLFSRYWFLALLYGVWLYLDWDTPSKGGRRSNWVRSWIVWKYFAEYFPIKLLCTAPLDPKYNYIMGFHPHGVLVVGAFGNFCTEGTGFSRLFPGLTPHLLMLPAWFRVPFFREYIMSGSLVSSDRSSAHYLLSQKSGGQALVIAVGGPPEALDAKPGELTLQLLNRTGFIKMALTHGAHLVPVLSFGENDLYNQVNNPRGSLLRTTQEKLQKVLGIALPLFHGRGVFQYSWGLLPHRRPIYTVVGSPIPVAKTPCPTQEQISSLHALYVAKLRELYTTHKGNYGIPRDRSLVLC</sequence>
<name>MOG2B_XENLA</name>
<evidence type="ECO:0000250" key="1">
    <source>
        <dbReference type="UniProtKB" id="Q3SYC2"/>
    </source>
</evidence>
<evidence type="ECO:0000250" key="2">
    <source>
        <dbReference type="UniProtKB" id="Q80W94"/>
    </source>
</evidence>
<evidence type="ECO:0000255" key="3"/>
<evidence type="ECO:0000305" key="4"/>
<proteinExistence type="evidence at transcript level"/>
<keyword id="KW-0012">Acyltransferase</keyword>
<keyword id="KW-0963">Cytoplasm</keyword>
<keyword id="KW-0256">Endoplasmic reticulum</keyword>
<keyword id="KW-0319">Glycerol metabolism</keyword>
<keyword id="KW-0325">Glycoprotein</keyword>
<keyword id="KW-0444">Lipid biosynthesis</keyword>
<keyword id="KW-0443">Lipid metabolism</keyword>
<keyword id="KW-0472">Membrane</keyword>
<keyword id="KW-1185">Reference proteome</keyword>
<keyword id="KW-0808">Transferase</keyword>
<keyword id="KW-0812">Transmembrane</keyword>
<keyword id="KW-1133">Transmembrane helix</keyword>
<dbReference type="EC" id="2.3.1.20" evidence="1"/>
<dbReference type="EC" id="2.3.1.22" evidence="1"/>
<dbReference type="EMBL" id="BC088676">
    <property type="protein sequence ID" value="AAH88676.1"/>
    <property type="molecule type" value="mRNA"/>
</dbReference>
<dbReference type="RefSeq" id="NP_001088871.1">
    <property type="nucleotide sequence ID" value="NM_001095402.1"/>
</dbReference>
<dbReference type="GlyCosmos" id="Q5M7F4">
    <property type="glycosylation" value="1 site, No reported glycans"/>
</dbReference>
<dbReference type="DNASU" id="496214"/>
<dbReference type="GeneID" id="496214"/>
<dbReference type="KEGG" id="xla:496214"/>
<dbReference type="AGR" id="Xenbase:XB-GENE-6040390"/>
<dbReference type="CTD" id="496214"/>
<dbReference type="Xenbase" id="XB-GENE-6040390">
    <property type="gene designation" value="mogat2.L"/>
</dbReference>
<dbReference type="OMA" id="RSQWMRR"/>
<dbReference type="OrthoDB" id="264532at2759"/>
<dbReference type="UniPathway" id="UPA00282"/>
<dbReference type="Proteomes" id="UP000186698">
    <property type="component" value="Chromosome 3L"/>
</dbReference>
<dbReference type="Bgee" id="496214">
    <property type="expression patterns" value="Expressed in heart and 10 other cell types or tissues"/>
</dbReference>
<dbReference type="GO" id="GO:0005789">
    <property type="term" value="C:endoplasmic reticulum membrane"/>
    <property type="evidence" value="ECO:0000318"/>
    <property type="project" value="GO_Central"/>
</dbReference>
<dbReference type="GO" id="GO:1990578">
    <property type="term" value="C:perinuclear endoplasmic reticulum membrane"/>
    <property type="evidence" value="ECO:0000250"/>
    <property type="project" value="UniProtKB"/>
</dbReference>
<dbReference type="GO" id="GO:0003846">
    <property type="term" value="F:2-acylglycerol O-acyltransferase activity"/>
    <property type="evidence" value="ECO:0000250"/>
    <property type="project" value="UniProtKB"/>
</dbReference>
<dbReference type="GO" id="GO:0004144">
    <property type="term" value="F:diacylglycerol O-acyltransferase activity"/>
    <property type="evidence" value="ECO:0000318"/>
    <property type="project" value="GO_Central"/>
</dbReference>
<dbReference type="GO" id="GO:0006071">
    <property type="term" value="P:glycerol metabolic process"/>
    <property type="evidence" value="ECO:0007669"/>
    <property type="project" value="UniProtKB-KW"/>
</dbReference>
<dbReference type="GO" id="GO:0006640">
    <property type="term" value="P:monoacylglycerol biosynthetic process"/>
    <property type="evidence" value="ECO:0000250"/>
    <property type="project" value="UniProtKB"/>
</dbReference>
<dbReference type="GO" id="GO:0019432">
    <property type="term" value="P:triglyceride biosynthetic process"/>
    <property type="evidence" value="ECO:0000318"/>
    <property type="project" value="GO_Central"/>
</dbReference>
<dbReference type="CDD" id="cd07987">
    <property type="entry name" value="LPLAT_MGAT-like"/>
    <property type="match status" value="1"/>
</dbReference>
<dbReference type="InterPro" id="IPR007130">
    <property type="entry name" value="DAGAT"/>
</dbReference>
<dbReference type="PANTHER" id="PTHR12317:SF78">
    <property type="entry name" value="ACYLTRANSFERASE"/>
    <property type="match status" value="1"/>
</dbReference>
<dbReference type="PANTHER" id="PTHR12317">
    <property type="entry name" value="DIACYLGLYCEROL O-ACYLTRANSFERASE"/>
    <property type="match status" value="1"/>
</dbReference>
<dbReference type="Pfam" id="PF03982">
    <property type="entry name" value="DAGAT"/>
    <property type="match status" value="1"/>
</dbReference>
<feature type="chain" id="PRO_0000249065" description="2-acylglycerol O-acyltransferase 2-B">
    <location>
        <begin position="1"/>
        <end position="335"/>
    </location>
</feature>
<feature type="transmembrane region" description="Helical" evidence="3">
    <location>
        <begin position="24"/>
        <end position="44"/>
    </location>
</feature>
<feature type="transmembrane region" description="Helical" evidence="3">
    <location>
        <begin position="104"/>
        <end position="124"/>
    </location>
</feature>
<feature type="glycosylation site" description="N-linked (GlcNAc...) asparagine" evidence="3">
    <location>
        <position position="206"/>
    </location>
</feature>
<comment type="function">
    <text evidence="1">Catalyzes the formation of diacylglycerol from 2-monoacylglycerol and fatty acyl-CoA.</text>
</comment>
<comment type="function">
    <text evidence="1 2">Involved in glycerolipid synthesis and lipid metabolism. Catalyzes the formation of diacylglycerol, the precursor of triacylglycerol, by transferring the acyl chain of a fatty acyl-CoA to a monoacylglycerol (By similarity). Plays a central role in absorption of dietary fat in the small intestine by catalyzing the resynthesis of triacylglycerol in enterocytes (By similarity). Has a preference toward monoacylglycerols containing unsaturated fatty acids in an order of C18:3 &gt; C18:2 &gt; C18:1 &gt; C18:0 at sn-2. Able to use 1-monoalkylglycerol (1-MAkG, 1-O-alkylglycerol) as an acyl acceptor for the synthesis of monoalkyl-monoacylglycerol (MAMAG, 1-O-alkyl-3-acylglycerol or 1-O-alkyl-2-acylglycerol) and subsequently, with lower efficiency, may add another acyl chain producing monoalkyl-diacylglycerol (MADAG, 1-O-alkyl-2,3-diacylglycerol). Possesses weak but significant activity with diacylglycerol as substrate, producing triacylglycerol (triacyl-sn-glycerol) (By similarity).</text>
</comment>
<comment type="catalytic activity">
    <reaction evidence="1">
        <text>a 2-acylglycerol + an acyl-CoA = a 1,2-diacylglycerol + CoA</text>
        <dbReference type="Rhea" id="RHEA:16741"/>
        <dbReference type="ChEBI" id="CHEBI:17389"/>
        <dbReference type="ChEBI" id="CHEBI:49172"/>
        <dbReference type="ChEBI" id="CHEBI:57287"/>
        <dbReference type="ChEBI" id="CHEBI:58342"/>
        <dbReference type="EC" id="2.3.1.22"/>
    </reaction>
    <physiologicalReaction direction="left-to-right" evidence="1">
        <dbReference type="Rhea" id="RHEA:16742"/>
    </physiologicalReaction>
</comment>
<comment type="catalytic activity">
    <reaction evidence="1">
        <text>a 2-acylglycerol + an acyl-CoA = a 1,2-diacyl-sn-glycerol + CoA</text>
        <dbReference type="Rhea" id="RHEA:32947"/>
        <dbReference type="ChEBI" id="CHEBI:17389"/>
        <dbReference type="ChEBI" id="CHEBI:17815"/>
        <dbReference type="ChEBI" id="CHEBI:57287"/>
        <dbReference type="ChEBI" id="CHEBI:58342"/>
    </reaction>
    <physiologicalReaction direction="left-to-right" evidence="1">
        <dbReference type="Rhea" id="RHEA:32948"/>
    </physiologicalReaction>
</comment>
<comment type="catalytic activity">
    <reaction evidence="1">
        <text>a 2-acylglycerol + an acyl-CoA = a 2,3-diacyl-sn-glycerol + CoA</text>
        <dbReference type="Rhea" id="RHEA:38467"/>
        <dbReference type="ChEBI" id="CHEBI:17389"/>
        <dbReference type="ChEBI" id="CHEBI:57287"/>
        <dbReference type="ChEBI" id="CHEBI:58342"/>
        <dbReference type="ChEBI" id="CHEBI:75524"/>
    </reaction>
    <physiologicalReaction direction="left-to-right" evidence="1">
        <dbReference type="Rhea" id="RHEA:38468"/>
    </physiologicalReaction>
</comment>
<comment type="catalytic activity">
    <reaction evidence="1">
        <text>a 1-acylglycerol + an acyl-CoA = a 1,2-diacylglycerol + CoA</text>
        <dbReference type="Rhea" id="RHEA:39943"/>
        <dbReference type="ChEBI" id="CHEBI:35759"/>
        <dbReference type="ChEBI" id="CHEBI:49172"/>
        <dbReference type="ChEBI" id="CHEBI:57287"/>
        <dbReference type="ChEBI" id="CHEBI:58342"/>
    </reaction>
    <physiologicalReaction direction="left-to-right" evidence="1">
        <dbReference type="Rhea" id="RHEA:39944"/>
    </physiologicalReaction>
</comment>
<comment type="catalytic activity">
    <reaction evidence="1">
        <text>a 1-acylglycerol + an acyl-CoA = a 1,3-diacylglycerol + CoA</text>
        <dbReference type="Rhea" id="RHEA:77571"/>
        <dbReference type="ChEBI" id="CHEBI:35759"/>
        <dbReference type="ChEBI" id="CHEBI:47777"/>
        <dbReference type="ChEBI" id="CHEBI:57287"/>
        <dbReference type="ChEBI" id="CHEBI:58342"/>
    </reaction>
    <physiologicalReaction direction="left-to-right" evidence="1">
        <dbReference type="Rhea" id="RHEA:77572"/>
    </physiologicalReaction>
</comment>
<comment type="catalytic activity">
    <reaction evidence="1">
        <text>1-O-alkylglycerol + an acyl-CoA = 1-O-alkyl-3-acylglycerol + CoA</text>
        <dbReference type="Rhea" id="RHEA:77627"/>
        <dbReference type="ChEBI" id="CHEBI:57287"/>
        <dbReference type="ChEBI" id="CHEBI:58342"/>
        <dbReference type="ChEBI" id="CHEBI:76225"/>
        <dbReference type="ChEBI" id="CHEBI:77997"/>
    </reaction>
    <physiologicalReaction direction="left-to-right" evidence="1">
        <dbReference type="Rhea" id="RHEA:77628"/>
    </physiologicalReaction>
</comment>
<comment type="catalytic activity">
    <reaction evidence="1">
        <text>an acyl-CoA + a 1,2-diacyl-sn-glycerol = a triacyl-sn-glycerol + CoA</text>
        <dbReference type="Rhea" id="RHEA:10868"/>
        <dbReference type="ChEBI" id="CHEBI:17815"/>
        <dbReference type="ChEBI" id="CHEBI:57287"/>
        <dbReference type="ChEBI" id="CHEBI:58342"/>
        <dbReference type="ChEBI" id="CHEBI:64615"/>
        <dbReference type="EC" id="2.3.1.20"/>
    </reaction>
    <physiologicalReaction direction="left-to-right" evidence="1">
        <dbReference type="Rhea" id="RHEA:10869"/>
    </physiologicalReaction>
</comment>
<comment type="pathway">
    <text>Glycerolipid metabolism; triacylglycerol biosynthesis.</text>
</comment>
<comment type="subcellular location">
    <subcellularLocation>
        <location evidence="1">Endoplasmic reticulum membrane</location>
        <topology evidence="1">Multi-pass membrane protein</topology>
    </subcellularLocation>
    <subcellularLocation>
        <location evidence="1">Cytoplasm</location>
        <location evidence="1">Perinuclear region</location>
    </subcellularLocation>
</comment>
<comment type="similarity">
    <text evidence="4">Belongs to the diacylglycerol acyltransferase family.</text>
</comment>
<reference key="1">
    <citation type="submission" date="2004-12" db="EMBL/GenBank/DDBJ databases">
        <authorList>
            <consortium name="NIH - Xenopus Gene Collection (XGC) project"/>
        </authorList>
    </citation>
    <scope>NUCLEOTIDE SEQUENCE [LARGE SCALE MRNA]</scope>
    <source>
        <tissue>Testis</tissue>
    </source>
</reference>
<organism>
    <name type="scientific">Xenopus laevis</name>
    <name type="common">African clawed frog</name>
    <dbReference type="NCBI Taxonomy" id="8355"/>
    <lineage>
        <taxon>Eukaryota</taxon>
        <taxon>Metazoa</taxon>
        <taxon>Chordata</taxon>
        <taxon>Craniata</taxon>
        <taxon>Vertebrata</taxon>
        <taxon>Euteleostomi</taxon>
        <taxon>Amphibia</taxon>
        <taxon>Batrachia</taxon>
        <taxon>Anura</taxon>
        <taxon>Pipoidea</taxon>
        <taxon>Pipidae</taxon>
        <taxon>Xenopodinae</taxon>
        <taxon>Xenopus</taxon>
        <taxon>Xenopus</taxon>
    </lineage>
</organism>
<protein>
    <recommendedName>
        <fullName>2-acylglycerol O-acyltransferase 2-B</fullName>
        <ecNumber evidence="1">2.3.1.20</ecNumber>
        <ecNumber evidence="1">2.3.1.22</ecNumber>
    </recommendedName>
    <alternativeName>
        <fullName>Acyl-CoA:monoacylglycerol acyltransferase 2-B</fullName>
        <shortName>MGAT2-B</shortName>
    </alternativeName>
    <alternativeName>
        <fullName>Monoacylglycerol O-acyltransferase 2-B</fullName>
    </alternativeName>
</protein>
<gene>
    <name type="primary">mogat2-b</name>
</gene>